<comment type="function">
    <text evidence="1">DNA-dependent RNA polymerase catalyzes the transcription of DNA into RNA using the four ribonucleoside triphosphates as substrates.</text>
</comment>
<comment type="catalytic activity">
    <reaction evidence="1">
        <text>RNA(n) + a ribonucleoside 5'-triphosphate = RNA(n+1) + diphosphate</text>
        <dbReference type="Rhea" id="RHEA:21248"/>
        <dbReference type="Rhea" id="RHEA-COMP:14527"/>
        <dbReference type="Rhea" id="RHEA-COMP:17342"/>
        <dbReference type="ChEBI" id="CHEBI:33019"/>
        <dbReference type="ChEBI" id="CHEBI:61557"/>
        <dbReference type="ChEBI" id="CHEBI:140395"/>
        <dbReference type="EC" id="2.7.7.6"/>
    </reaction>
</comment>
<comment type="cofactor">
    <cofactor evidence="1">
        <name>Mg(2+)</name>
        <dbReference type="ChEBI" id="CHEBI:18420"/>
    </cofactor>
    <text evidence="1">Binds 1 Mg(2+) ion per subunit.</text>
</comment>
<comment type="cofactor">
    <cofactor evidence="1">
        <name>Zn(2+)</name>
        <dbReference type="ChEBI" id="CHEBI:29105"/>
    </cofactor>
    <text evidence="1">Binds 2 Zn(2+) ions per subunit.</text>
</comment>
<comment type="subunit">
    <text evidence="1">The RNAP catalytic core consists of 2 alpha, 1 beta, 1 beta' and 1 omega subunit. When a sigma factor is associated with the core the holoenzyme is formed, which can initiate transcription.</text>
</comment>
<comment type="similarity">
    <text evidence="1">Belongs to the RNA polymerase beta' chain family.</text>
</comment>
<feature type="chain" id="PRO_0000353294" description="DNA-directed RNA polymerase subunit beta'">
    <location>
        <begin position="1"/>
        <end position="1203"/>
    </location>
</feature>
<feature type="binding site" evidence="1">
    <location>
        <position position="60"/>
    </location>
    <ligand>
        <name>Zn(2+)</name>
        <dbReference type="ChEBI" id="CHEBI:29105"/>
        <label>1</label>
    </ligand>
</feature>
<feature type="binding site" evidence="1">
    <location>
        <position position="62"/>
    </location>
    <ligand>
        <name>Zn(2+)</name>
        <dbReference type="ChEBI" id="CHEBI:29105"/>
        <label>1</label>
    </ligand>
</feature>
<feature type="binding site" evidence="1">
    <location>
        <position position="75"/>
    </location>
    <ligand>
        <name>Zn(2+)</name>
        <dbReference type="ChEBI" id="CHEBI:29105"/>
        <label>1</label>
    </ligand>
</feature>
<feature type="binding site" evidence="1">
    <location>
        <position position="78"/>
    </location>
    <ligand>
        <name>Zn(2+)</name>
        <dbReference type="ChEBI" id="CHEBI:29105"/>
        <label>1</label>
    </ligand>
</feature>
<feature type="binding site" evidence="1">
    <location>
        <position position="449"/>
    </location>
    <ligand>
        <name>Mg(2+)</name>
        <dbReference type="ChEBI" id="CHEBI:18420"/>
    </ligand>
</feature>
<feature type="binding site" evidence="1">
    <location>
        <position position="451"/>
    </location>
    <ligand>
        <name>Mg(2+)</name>
        <dbReference type="ChEBI" id="CHEBI:18420"/>
    </ligand>
</feature>
<feature type="binding site" evidence="1">
    <location>
        <position position="453"/>
    </location>
    <ligand>
        <name>Mg(2+)</name>
        <dbReference type="ChEBI" id="CHEBI:18420"/>
    </ligand>
</feature>
<feature type="binding site" evidence="1">
    <location>
        <position position="818"/>
    </location>
    <ligand>
        <name>Zn(2+)</name>
        <dbReference type="ChEBI" id="CHEBI:29105"/>
        <label>2</label>
    </ligand>
</feature>
<feature type="binding site" evidence="1">
    <location>
        <position position="892"/>
    </location>
    <ligand>
        <name>Zn(2+)</name>
        <dbReference type="ChEBI" id="CHEBI:29105"/>
        <label>2</label>
    </ligand>
</feature>
<feature type="binding site" evidence="1">
    <location>
        <position position="899"/>
    </location>
    <ligand>
        <name>Zn(2+)</name>
        <dbReference type="ChEBI" id="CHEBI:29105"/>
        <label>2</label>
    </ligand>
</feature>
<feature type="binding site" evidence="1">
    <location>
        <position position="902"/>
    </location>
    <ligand>
        <name>Zn(2+)</name>
        <dbReference type="ChEBI" id="CHEBI:29105"/>
        <label>2</label>
    </ligand>
</feature>
<protein>
    <recommendedName>
        <fullName evidence="1">DNA-directed RNA polymerase subunit beta'</fullName>
        <shortName evidence="1">RNAP subunit beta'</shortName>
        <ecNumber evidence="1">2.7.7.6</ecNumber>
    </recommendedName>
    <alternativeName>
        <fullName evidence="1">RNA polymerase subunit beta'</fullName>
    </alternativeName>
    <alternativeName>
        <fullName evidence="1">Transcriptase subunit beta'</fullName>
    </alternativeName>
</protein>
<organism>
    <name type="scientific">Bacillus thuringiensis (strain Al Hakam)</name>
    <dbReference type="NCBI Taxonomy" id="412694"/>
    <lineage>
        <taxon>Bacteria</taxon>
        <taxon>Bacillati</taxon>
        <taxon>Bacillota</taxon>
        <taxon>Bacilli</taxon>
        <taxon>Bacillales</taxon>
        <taxon>Bacillaceae</taxon>
        <taxon>Bacillus</taxon>
        <taxon>Bacillus cereus group</taxon>
    </lineage>
</organism>
<name>RPOC_BACAH</name>
<sequence length="1203" mass="134421">MIDVNNFEYMKIGLASPDKIRSWSYGEVKKPETINYRTLKPEKDGLFCERIFGPQKDWECHCGKYKRVRYKGVVCDRCGVEVTRAKVRRERMGHIELAAPVSHIWYFKGIPSRMGLVLDMSPRALEEVIYFASYVVTESGDTPLDKKQLLSEKEYRAYRDRYGSTFQAAMGAEAIKKLLQDIDLDKEVDFLKEELKTAQGQRRTRAIKRLEVLEAFRNSGNEPSWMILDVLPVIPPELRPMVQLDGGRFATSDLNDLYRRVINRNNRLKRLLDLGAPSIIVQNEKRMLQEAVDALIDNGRRGRPVTGPGNRPLKSLSHMLKGKQGRFRQNLLGKRVDYSGRSVIVVGPNLKMYQCGLPKEMALELFKPFVMKELVEKGLAHNIKSAKRKIERVQPEVWDVLESVIKEHPVLLNRAPTLHRLGIQAFEPTLVEGRAIRLHPLVCTAYNADFDGDQMAVHVPLSSEAQAEARLLMLAAQNILNPKDGKPVVTPSQDMVLGNYYLTLEREGAIGEGMVFKDANEALLAYQNGYVHLHTRVAVAASAVNNATFTEEQKNMLLLTTVGKLIFNEILPESFPYINEPTNSNLEKETPAKYFVEKGANIKEIIASREEVAPFSKKILGNIIAEVFKRFKITETSRMLDRMKNLGFKYSTKAGITVGVSDILVLGEKDEILHEAQAKVDNVIKQFRRGLITEEERYDRVISIWSNAKDVIQGKLMKSLNKRNPIFMMSDSGARGNASNFTQLAGMRGLMANPSGRIIELPIKSSFREGLTVLEYFISTHGARKGLADTALKTADSGYLTRRLVDVAQDVIVREDDCGTDRGLLIGAIKEGNEVIESLYDRLVGRFARKTVKHPETGEVLVAENQLITEDIAHIVENSGVETVNIRSAFTCNTRHGVCKKCYGRNLATGTDVEVGEAVGIIAAQSIGEPGTQLTMRTFHTGGVAGDDITQGLPRIQEIFEARNPKGQAVISEIDGVIAAINDVKDRQEVVVQGEVEARTYAIPYGARLKVIPGQKISHGKELTEGSIDPKELLKVTDITAVQEYLLREVQKVYRMQGVEIGDKHVEVMVRQMLRKVRVSDAGETDVLPGTLLDIHQFTDANAKVLLQGKQPATARPVLLGITKASLETDSFLSAASFQETTRVLTDAAIKGKRDELLGLKENVIIGKLVPAGTGMNRYRKVDLVKTTQDDMNVENDEVYVEQ</sequence>
<reference key="1">
    <citation type="journal article" date="2007" name="J. Bacteriol.">
        <title>The complete genome sequence of Bacillus thuringiensis Al Hakam.</title>
        <authorList>
            <person name="Challacombe J.F."/>
            <person name="Altherr M.R."/>
            <person name="Xie G."/>
            <person name="Bhotika S.S."/>
            <person name="Brown N."/>
            <person name="Bruce D."/>
            <person name="Campbell C.S."/>
            <person name="Campbell M.L."/>
            <person name="Chen J."/>
            <person name="Chertkov O."/>
            <person name="Cleland C."/>
            <person name="Dimitrijevic M."/>
            <person name="Doggett N.A."/>
            <person name="Fawcett J.J."/>
            <person name="Glavina T."/>
            <person name="Goodwin L.A."/>
            <person name="Green L.D."/>
            <person name="Han C.S."/>
            <person name="Hill K.K."/>
            <person name="Hitchcock P."/>
            <person name="Jackson P.J."/>
            <person name="Keim P."/>
            <person name="Kewalramani A.R."/>
            <person name="Longmire J."/>
            <person name="Lucas S."/>
            <person name="Malfatti S."/>
            <person name="Martinez D."/>
            <person name="McMurry K."/>
            <person name="Meincke L.J."/>
            <person name="Misra M."/>
            <person name="Moseman B.L."/>
            <person name="Mundt M."/>
            <person name="Munk A.C."/>
            <person name="Okinaka R.T."/>
            <person name="Parson-Quintana B."/>
            <person name="Reilly L.P."/>
            <person name="Richardson P."/>
            <person name="Robinson D.L."/>
            <person name="Saunders E."/>
            <person name="Tapia R."/>
            <person name="Tesmer J.G."/>
            <person name="Thayer N."/>
            <person name="Thompson L.S."/>
            <person name="Tice H."/>
            <person name="Ticknor L.O."/>
            <person name="Wills P.L."/>
            <person name="Gilna P."/>
            <person name="Brettin T.S."/>
        </authorList>
    </citation>
    <scope>NUCLEOTIDE SEQUENCE [LARGE SCALE GENOMIC DNA]</scope>
    <source>
        <strain>Al Hakam</strain>
    </source>
</reference>
<gene>
    <name evidence="1" type="primary">rpoC</name>
    <name type="ordered locus">BALH_0101</name>
</gene>
<accession>A0R8H3</accession>
<proteinExistence type="inferred from homology"/>
<dbReference type="EC" id="2.7.7.6" evidence="1"/>
<dbReference type="EMBL" id="CP000485">
    <property type="protein sequence ID" value="ABK83516.1"/>
    <property type="molecule type" value="Genomic_DNA"/>
</dbReference>
<dbReference type="RefSeq" id="WP_000567936.1">
    <property type="nucleotide sequence ID" value="NC_008600.1"/>
</dbReference>
<dbReference type="SMR" id="A0R8H3"/>
<dbReference type="KEGG" id="btl:BALH_0101"/>
<dbReference type="HOGENOM" id="CLU_000524_3_1_9"/>
<dbReference type="GO" id="GO:0000428">
    <property type="term" value="C:DNA-directed RNA polymerase complex"/>
    <property type="evidence" value="ECO:0007669"/>
    <property type="project" value="UniProtKB-KW"/>
</dbReference>
<dbReference type="GO" id="GO:0003677">
    <property type="term" value="F:DNA binding"/>
    <property type="evidence" value="ECO:0007669"/>
    <property type="project" value="UniProtKB-UniRule"/>
</dbReference>
<dbReference type="GO" id="GO:0003899">
    <property type="term" value="F:DNA-directed RNA polymerase activity"/>
    <property type="evidence" value="ECO:0007669"/>
    <property type="project" value="UniProtKB-UniRule"/>
</dbReference>
<dbReference type="GO" id="GO:0000287">
    <property type="term" value="F:magnesium ion binding"/>
    <property type="evidence" value="ECO:0007669"/>
    <property type="project" value="UniProtKB-UniRule"/>
</dbReference>
<dbReference type="GO" id="GO:0008270">
    <property type="term" value="F:zinc ion binding"/>
    <property type="evidence" value="ECO:0007669"/>
    <property type="project" value="UniProtKB-UniRule"/>
</dbReference>
<dbReference type="GO" id="GO:0006351">
    <property type="term" value="P:DNA-templated transcription"/>
    <property type="evidence" value="ECO:0007669"/>
    <property type="project" value="UniProtKB-UniRule"/>
</dbReference>
<dbReference type="CDD" id="cd02655">
    <property type="entry name" value="RNAP_beta'_C"/>
    <property type="match status" value="1"/>
</dbReference>
<dbReference type="CDD" id="cd01609">
    <property type="entry name" value="RNAP_beta'_N"/>
    <property type="match status" value="1"/>
</dbReference>
<dbReference type="FunFam" id="1.10.150.390:FF:000002">
    <property type="entry name" value="DNA-directed RNA polymerase subunit beta"/>
    <property type="match status" value="1"/>
</dbReference>
<dbReference type="FunFam" id="1.10.40.90:FF:000001">
    <property type="entry name" value="DNA-directed RNA polymerase subunit beta"/>
    <property type="match status" value="1"/>
</dbReference>
<dbReference type="FunFam" id="4.10.860.120:FF:000001">
    <property type="entry name" value="DNA-directed RNA polymerase subunit beta"/>
    <property type="match status" value="1"/>
</dbReference>
<dbReference type="Gene3D" id="1.10.132.30">
    <property type="match status" value="1"/>
</dbReference>
<dbReference type="Gene3D" id="1.10.150.390">
    <property type="match status" value="1"/>
</dbReference>
<dbReference type="Gene3D" id="1.10.1790.20">
    <property type="match status" value="1"/>
</dbReference>
<dbReference type="Gene3D" id="1.10.40.90">
    <property type="match status" value="1"/>
</dbReference>
<dbReference type="Gene3D" id="2.40.40.20">
    <property type="match status" value="1"/>
</dbReference>
<dbReference type="Gene3D" id="2.40.50.100">
    <property type="match status" value="1"/>
</dbReference>
<dbReference type="Gene3D" id="4.10.860.120">
    <property type="entry name" value="RNA polymerase II, clamp domain"/>
    <property type="match status" value="1"/>
</dbReference>
<dbReference type="Gene3D" id="1.10.274.100">
    <property type="entry name" value="RNA polymerase Rpb1, domain 3"/>
    <property type="match status" value="1"/>
</dbReference>
<dbReference type="HAMAP" id="MF_01322">
    <property type="entry name" value="RNApol_bact_RpoC"/>
    <property type="match status" value="1"/>
</dbReference>
<dbReference type="InterPro" id="IPR045867">
    <property type="entry name" value="DNA-dir_RpoC_beta_prime"/>
</dbReference>
<dbReference type="InterPro" id="IPR012754">
    <property type="entry name" value="DNA-dir_RpoC_beta_prime_bact"/>
</dbReference>
<dbReference type="InterPro" id="IPR000722">
    <property type="entry name" value="RNA_pol_asu"/>
</dbReference>
<dbReference type="InterPro" id="IPR006592">
    <property type="entry name" value="RNA_pol_N"/>
</dbReference>
<dbReference type="InterPro" id="IPR007080">
    <property type="entry name" value="RNA_pol_Rpb1_1"/>
</dbReference>
<dbReference type="InterPro" id="IPR007066">
    <property type="entry name" value="RNA_pol_Rpb1_3"/>
</dbReference>
<dbReference type="InterPro" id="IPR042102">
    <property type="entry name" value="RNA_pol_Rpb1_3_sf"/>
</dbReference>
<dbReference type="InterPro" id="IPR007083">
    <property type="entry name" value="RNA_pol_Rpb1_4"/>
</dbReference>
<dbReference type="InterPro" id="IPR007081">
    <property type="entry name" value="RNA_pol_Rpb1_5"/>
</dbReference>
<dbReference type="InterPro" id="IPR044893">
    <property type="entry name" value="RNA_pol_Rpb1_clamp_domain"/>
</dbReference>
<dbReference type="InterPro" id="IPR038120">
    <property type="entry name" value="Rpb1_funnel_sf"/>
</dbReference>
<dbReference type="NCBIfam" id="TIGR02386">
    <property type="entry name" value="rpoC_TIGR"/>
    <property type="match status" value="1"/>
</dbReference>
<dbReference type="PANTHER" id="PTHR19376">
    <property type="entry name" value="DNA-DIRECTED RNA POLYMERASE"/>
    <property type="match status" value="1"/>
</dbReference>
<dbReference type="PANTHER" id="PTHR19376:SF54">
    <property type="entry name" value="DNA-DIRECTED RNA POLYMERASE SUBUNIT BETA"/>
    <property type="match status" value="1"/>
</dbReference>
<dbReference type="Pfam" id="PF04997">
    <property type="entry name" value="RNA_pol_Rpb1_1"/>
    <property type="match status" value="1"/>
</dbReference>
<dbReference type="Pfam" id="PF00623">
    <property type="entry name" value="RNA_pol_Rpb1_2"/>
    <property type="match status" value="2"/>
</dbReference>
<dbReference type="Pfam" id="PF04983">
    <property type="entry name" value="RNA_pol_Rpb1_3"/>
    <property type="match status" value="1"/>
</dbReference>
<dbReference type="Pfam" id="PF05000">
    <property type="entry name" value="RNA_pol_Rpb1_4"/>
    <property type="match status" value="1"/>
</dbReference>
<dbReference type="Pfam" id="PF04998">
    <property type="entry name" value="RNA_pol_Rpb1_5"/>
    <property type="match status" value="1"/>
</dbReference>
<dbReference type="SMART" id="SM00663">
    <property type="entry name" value="RPOLA_N"/>
    <property type="match status" value="1"/>
</dbReference>
<dbReference type="SUPFAM" id="SSF64484">
    <property type="entry name" value="beta and beta-prime subunits of DNA dependent RNA-polymerase"/>
    <property type="match status" value="1"/>
</dbReference>
<evidence type="ECO:0000255" key="1">
    <source>
        <dbReference type="HAMAP-Rule" id="MF_01322"/>
    </source>
</evidence>
<keyword id="KW-0240">DNA-directed RNA polymerase</keyword>
<keyword id="KW-0460">Magnesium</keyword>
<keyword id="KW-0479">Metal-binding</keyword>
<keyword id="KW-0548">Nucleotidyltransferase</keyword>
<keyword id="KW-0804">Transcription</keyword>
<keyword id="KW-0808">Transferase</keyword>
<keyword id="KW-0862">Zinc</keyword>